<protein>
    <recommendedName>
        <fullName>Origin recognition complex subunit 6</fullName>
    </recommendedName>
</protein>
<organism>
    <name type="scientific">Drosophila melanogaster</name>
    <name type="common">Fruit fly</name>
    <dbReference type="NCBI Taxonomy" id="7227"/>
    <lineage>
        <taxon>Eukaryota</taxon>
        <taxon>Metazoa</taxon>
        <taxon>Ecdysozoa</taxon>
        <taxon>Arthropoda</taxon>
        <taxon>Hexapoda</taxon>
        <taxon>Insecta</taxon>
        <taxon>Pterygota</taxon>
        <taxon>Neoptera</taxon>
        <taxon>Endopterygota</taxon>
        <taxon>Diptera</taxon>
        <taxon>Brachycera</taxon>
        <taxon>Muscomorpha</taxon>
        <taxon>Ephydroidea</taxon>
        <taxon>Drosophilidae</taxon>
        <taxon>Drosophila</taxon>
        <taxon>Sophophora</taxon>
    </lineage>
</organism>
<name>ORC6_DROME</name>
<dbReference type="EMBL" id="AF139064">
    <property type="protein sequence ID" value="AAD39474.1"/>
    <property type="molecule type" value="mRNA"/>
</dbReference>
<dbReference type="EMBL" id="AE013599">
    <property type="protein sequence ID" value="AAF58890.1"/>
    <property type="molecule type" value="Genomic_DNA"/>
</dbReference>
<dbReference type="EMBL" id="AY071443">
    <property type="protein sequence ID" value="AAL49065.1"/>
    <property type="molecule type" value="mRNA"/>
</dbReference>
<dbReference type="RefSeq" id="NP_477319.1">
    <property type="nucleotide sequence ID" value="NM_057971.6"/>
</dbReference>
<dbReference type="PDB" id="4XGC">
    <property type="method" value="X-ray"/>
    <property type="resolution" value="3.50 A"/>
    <property type="chains" value="F=187-257"/>
</dbReference>
<dbReference type="PDB" id="7JGR">
    <property type="method" value="EM"/>
    <property type="resolution" value="3.90 A"/>
    <property type="chains" value="F=1-257"/>
</dbReference>
<dbReference type="PDB" id="7JGS">
    <property type="method" value="EM"/>
    <property type="resolution" value="3.20 A"/>
    <property type="chains" value="F=1-257"/>
</dbReference>
<dbReference type="PDB" id="7JK2">
    <property type="method" value="EM"/>
    <property type="resolution" value="3.20 A"/>
    <property type="chains" value="F=1-257"/>
</dbReference>
<dbReference type="PDB" id="7JK3">
    <property type="method" value="EM"/>
    <property type="resolution" value="3.40 A"/>
    <property type="chains" value="F=1-257"/>
</dbReference>
<dbReference type="PDB" id="7JK4">
    <property type="method" value="EM"/>
    <property type="resolution" value="3.40 A"/>
    <property type="chains" value="F=1-257"/>
</dbReference>
<dbReference type="PDB" id="7JK5">
    <property type="method" value="EM"/>
    <property type="resolution" value="3.90 A"/>
    <property type="chains" value="F=1-257"/>
</dbReference>
<dbReference type="PDB" id="7JK6">
    <property type="method" value="EM"/>
    <property type="resolution" value="4.00 A"/>
    <property type="chains" value="F=1-257"/>
</dbReference>
<dbReference type="PDBsum" id="4XGC"/>
<dbReference type="PDBsum" id="7JGR"/>
<dbReference type="PDBsum" id="7JGS"/>
<dbReference type="PDBsum" id="7JK2"/>
<dbReference type="PDBsum" id="7JK3"/>
<dbReference type="PDBsum" id="7JK4"/>
<dbReference type="PDBsum" id="7JK5"/>
<dbReference type="PDBsum" id="7JK6"/>
<dbReference type="EMDB" id="EMD-22329"/>
<dbReference type="EMDB" id="EMD-22330"/>
<dbReference type="EMDB" id="EMD-22359"/>
<dbReference type="EMDB" id="EMD-22360"/>
<dbReference type="EMDB" id="EMD-22361"/>
<dbReference type="EMDB" id="EMD-22362"/>
<dbReference type="EMDB" id="EMD-22363"/>
<dbReference type="SMR" id="Q9Y1B2"/>
<dbReference type="BioGRID" id="61846">
    <property type="interactions" value="20"/>
</dbReference>
<dbReference type="ComplexPortal" id="CPX-2369">
    <property type="entry name" value="Nuclear origin recognition complex"/>
</dbReference>
<dbReference type="DIP" id="DIP-49258N"/>
<dbReference type="FunCoup" id="Q9Y1B2">
    <property type="interactions" value="808"/>
</dbReference>
<dbReference type="IntAct" id="Q9Y1B2">
    <property type="interactions" value="11"/>
</dbReference>
<dbReference type="STRING" id="7227.FBpp0087566"/>
<dbReference type="PaxDb" id="7227-FBpp0087566"/>
<dbReference type="DNASU" id="36017"/>
<dbReference type="EnsemblMetazoa" id="FBtr0088482">
    <property type="protein sequence ID" value="FBpp0087566"/>
    <property type="gene ID" value="FBgn0023180"/>
</dbReference>
<dbReference type="GeneID" id="36017"/>
<dbReference type="KEGG" id="dme:Dmel_CG1584"/>
<dbReference type="AGR" id="FB:FBgn0023180"/>
<dbReference type="CTD" id="23594"/>
<dbReference type="FlyBase" id="FBgn0023180">
    <property type="gene designation" value="Orc6"/>
</dbReference>
<dbReference type="VEuPathDB" id="VectorBase:FBgn0023180"/>
<dbReference type="eggNOG" id="KOG4557">
    <property type="taxonomic scope" value="Eukaryota"/>
</dbReference>
<dbReference type="GeneTree" id="ENSGT00390000007370"/>
<dbReference type="HOGENOM" id="CLU_067825_0_0_1"/>
<dbReference type="InParanoid" id="Q9Y1B2"/>
<dbReference type="OMA" id="RKSHYLN"/>
<dbReference type="OrthoDB" id="5552484at2759"/>
<dbReference type="PhylomeDB" id="Q9Y1B2"/>
<dbReference type="Reactome" id="R-DME-176187">
    <property type="pathway name" value="Activation of ATR in response to replication stress"/>
</dbReference>
<dbReference type="Reactome" id="R-DME-68616">
    <property type="pathway name" value="Assembly of the ORC complex at the origin of replication"/>
</dbReference>
<dbReference type="Reactome" id="R-DME-68689">
    <property type="pathway name" value="CDC6 association with the ORC:origin complex"/>
</dbReference>
<dbReference type="Reactome" id="R-DME-68949">
    <property type="pathway name" value="Orc1 removal from chromatin"/>
</dbReference>
<dbReference type="Reactome" id="R-DME-68962">
    <property type="pathway name" value="Activation of the pre-replicative complex"/>
</dbReference>
<dbReference type="SignaLink" id="Q9Y1B2"/>
<dbReference type="BioGRID-ORCS" id="36017">
    <property type="hits" value="1 hit in 1 CRISPR screen"/>
</dbReference>
<dbReference type="CD-CODE" id="19512460">
    <property type="entry name" value="Synthetic Condensate 000336"/>
</dbReference>
<dbReference type="CD-CODE" id="477BAC9B">
    <property type="entry name" value="Synthetic Condensate 000340"/>
</dbReference>
<dbReference type="EvolutionaryTrace" id="Q9Y1B2"/>
<dbReference type="GenomeRNAi" id="36017"/>
<dbReference type="PRO" id="PR:Q9Y1B2"/>
<dbReference type="Proteomes" id="UP000000803">
    <property type="component" value="Chromosome 2R"/>
</dbReference>
<dbReference type="Bgee" id="FBgn0023180">
    <property type="expression patterns" value="Expressed in secondary oocyte and 33 other cell types or tissues"/>
</dbReference>
<dbReference type="GO" id="GO:0005664">
    <property type="term" value="C:nuclear origin of replication recognition complex"/>
    <property type="evidence" value="ECO:0000314"/>
    <property type="project" value="FlyBase"/>
</dbReference>
<dbReference type="GO" id="GO:0005634">
    <property type="term" value="C:nucleus"/>
    <property type="evidence" value="ECO:0000314"/>
    <property type="project" value="UniProtKB"/>
</dbReference>
<dbReference type="GO" id="GO:0000808">
    <property type="term" value="C:origin recognition complex"/>
    <property type="evidence" value="ECO:0000314"/>
    <property type="project" value="FlyBase"/>
</dbReference>
<dbReference type="GO" id="GO:0005886">
    <property type="term" value="C:plasma membrane"/>
    <property type="evidence" value="ECO:0000314"/>
    <property type="project" value="FlyBase"/>
</dbReference>
<dbReference type="GO" id="GO:0032156">
    <property type="term" value="C:septin cytoskeleton"/>
    <property type="evidence" value="ECO:0000314"/>
    <property type="project" value="FlyBase"/>
</dbReference>
<dbReference type="GO" id="GO:0003677">
    <property type="term" value="F:DNA binding"/>
    <property type="evidence" value="ECO:0007669"/>
    <property type="project" value="UniProtKB-KW"/>
</dbReference>
<dbReference type="GO" id="GO:0005096">
    <property type="term" value="F:GTPase activator activity"/>
    <property type="evidence" value="ECO:0000314"/>
    <property type="project" value="FlyBase"/>
</dbReference>
<dbReference type="GO" id="GO:0042803">
    <property type="term" value="F:protein homodimerization activity"/>
    <property type="evidence" value="ECO:0000314"/>
    <property type="project" value="FlyBase"/>
</dbReference>
<dbReference type="GO" id="GO:0006260">
    <property type="term" value="P:DNA replication"/>
    <property type="evidence" value="ECO:0000315"/>
    <property type="project" value="FlyBase"/>
</dbReference>
<dbReference type="GO" id="GO:0006270">
    <property type="term" value="P:DNA replication initiation"/>
    <property type="evidence" value="ECO:0000314"/>
    <property type="project" value="FlyBase"/>
</dbReference>
<dbReference type="GO" id="GO:0000278">
    <property type="term" value="P:mitotic cell cycle"/>
    <property type="evidence" value="ECO:0000315"/>
    <property type="project" value="FlyBase"/>
</dbReference>
<dbReference type="GO" id="GO:0032185">
    <property type="term" value="P:septin cytoskeleton organization"/>
    <property type="evidence" value="ECO:0000314"/>
    <property type="project" value="FlyBase"/>
</dbReference>
<dbReference type="CDD" id="cd16075">
    <property type="entry name" value="ORC6_CTD"/>
    <property type="match status" value="1"/>
</dbReference>
<dbReference type="CDD" id="cd11583">
    <property type="entry name" value="Orc6_mid"/>
    <property type="match status" value="1"/>
</dbReference>
<dbReference type="FunFam" id="1.10.472.10:FF:000176">
    <property type="entry name" value="origin recognition complex subunit 6"/>
    <property type="match status" value="1"/>
</dbReference>
<dbReference type="Gene3D" id="1.10.472.10">
    <property type="entry name" value="Cyclin-like"/>
    <property type="match status" value="1"/>
</dbReference>
<dbReference type="InterPro" id="IPR054113">
    <property type="entry name" value="ORC6_cyclin-like_2nd"/>
</dbReference>
<dbReference type="InterPro" id="IPR008721">
    <property type="entry name" value="ORC6_cyclin_first"/>
</dbReference>
<dbReference type="InterPro" id="IPR020529">
    <property type="entry name" value="ORC6_met/pln"/>
</dbReference>
<dbReference type="PANTHER" id="PTHR13394">
    <property type="entry name" value="ORIGIN RECOGNITION COMPLEX SUBUNIT 6"/>
    <property type="match status" value="1"/>
</dbReference>
<dbReference type="PANTHER" id="PTHR13394:SF0">
    <property type="entry name" value="ORIGIN RECOGNITION COMPLEX SUBUNIT 6"/>
    <property type="match status" value="1"/>
</dbReference>
<dbReference type="Pfam" id="PF05460">
    <property type="entry name" value="ORC6"/>
    <property type="match status" value="1"/>
</dbReference>
<dbReference type="Pfam" id="PF21913">
    <property type="entry name" value="ORC6_2nd"/>
    <property type="match status" value="1"/>
</dbReference>
<comment type="function">
    <text evidence="1">Component of the origin recognition complex (ORC) that binds origins of replication. DNA-binding is ATP-dependent, however specific DNA sequences that define origins of replication have not been identified so far. ORC is required to assemble the pre-replication complex necessary to initiate DNA replication (By similarity).</text>
</comment>
<comment type="subunit">
    <text>ORC is composed of six subunits.</text>
</comment>
<comment type="interaction">
    <interactant intactId="EBI-113296">
        <id>Q9Y1B2</id>
    </interactant>
    <interactant intactId="EBI-182021">
        <id>Q7K2L1</id>
        <label>Orc3</label>
    </interactant>
    <organismsDiffer>false</organismsDiffer>
    <experiments>2</experiments>
</comment>
<comment type="subcellular location">
    <subcellularLocation>
        <location evidence="1">Nucleus</location>
    </subcellularLocation>
</comment>
<comment type="similarity">
    <text evidence="3">Belongs to the ORC6 family.</text>
</comment>
<accession>Q9Y1B2</accession>
<accession>Q9V5C5</accession>
<reference key="1">
    <citation type="journal article" date="1999" name="Genes Dev.">
        <title>Assembly of functionally active Drosophila origin recognition complex from recombinant proteins.</title>
        <authorList>
            <person name="Chesnokov I."/>
            <person name="Gossen M."/>
            <person name="Remus D."/>
            <person name="Botchan M."/>
        </authorList>
    </citation>
    <scope>NUCLEOTIDE SEQUENCE [MRNA]</scope>
</reference>
<reference key="2">
    <citation type="journal article" date="2000" name="Science">
        <title>The genome sequence of Drosophila melanogaster.</title>
        <authorList>
            <person name="Adams M.D."/>
            <person name="Celniker S.E."/>
            <person name="Holt R.A."/>
            <person name="Evans C.A."/>
            <person name="Gocayne J.D."/>
            <person name="Amanatides P.G."/>
            <person name="Scherer S.E."/>
            <person name="Li P.W."/>
            <person name="Hoskins R.A."/>
            <person name="Galle R.F."/>
            <person name="George R.A."/>
            <person name="Lewis S.E."/>
            <person name="Richards S."/>
            <person name="Ashburner M."/>
            <person name="Henderson S.N."/>
            <person name="Sutton G.G."/>
            <person name="Wortman J.R."/>
            <person name="Yandell M.D."/>
            <person name="Zhang Q."/>
            <person name="Chen L.X."/>
            <person name="Brandon R.C."/>
            <person name="Rogers Y.-H.C."/>
            <person name="Blazej R.G."/>
            <person name="Champe M."/>
            <person name="Pfeiffer B.D."/>
            <person name="Wan K.H."/>
            <person name="Doyle C."/>
            <person name="Baxter E.G."/>
            <person name="Helt G."/>
            <person name="Nelson C.R."/>
            <person name="Miklos G.L.G."/>
            <person name="Abril J.F."/>
            <person name="Agbayani A."/>
            <person name="An H.-J."/>
            <person name="Andrews-Pfannkoch C."/>
            <person name="Baldwin D."/>
            <person name="Ballew R.M."/>
            <person name="Basu A."/>
            <person name="Baxendale J."/>
            <person name="Bayraktaroglu L."/>
            <person name="Beasley E.M."/>
            <person name="Beeson K.Y."/>
            <person name="Benos P.V."/>
            <person name="Berman B.P."/>
            <person name="Bhandari D."/>
            <person name="Bolshakov S."/>
            <person name="Borkova D."/>
            <person name="Botchan M.R."/>
            <person name="Bouck J."/>
            <person name="Brokstein P."/>
            <person name="Brottier P."/>
            <person name="Burtis K.C."/>
            <person name="Busam D.A."/>
            <person name="Butler H."/>
            <person name="Cadieu E."/>
            <person name="Center A."/>
            <person name="Chandra I."/>
            <person name="Cherry J.M."/>
            <person name="Cawley S."/>
            <person name="Dahlke C."/>
            <person name="Davenport L.B."/>
            <person name="Davies P."/>
            <person name="de Pablos B."/>
            <person name="Delcher A."/>
            <person name="Deng Z."/>
            <person name="Mays A.D."/>
            <person name="Dew I."/>
            <person name="Dietz S.M."/>
            <person name="Dodson K."/>
            <person name="Doup L.E."/>
            <person name="Downes M."/>
            <person name="Dugan-Rocha S."/>
            <person name="Dunkov B.C."/>
            <person name="Dunn P."/>
            <person name="Durbin K.J."/>
            <person name="Evangelista C.C."/>
            <person name="Ferraz C."/>
            <person name="Ferriera S."/>
            <person name="Fleischmann W."/>
            <person name="Fosler C."/>
            <person name="Gabrielian A.E."/>
            <person name="Garg N.S."/>
            <person name="Gelbart W.M."/>
            <person name="Glasser K."/>
            <person name="Glodek A."/>
            <person name="Gong F."/>
            <person name="Gorrell J.H."/>
            <person name="Gu Z."/>
            <person name="Guan P."/>
            <person name="Harris M."/>
            <person name="Harris N.L."/>
            <person name="Harvey D.A."/>
            <person name="Heiman T.J."/>
            <person name="Hernandez J.R."/>
            <person name="Houck J."/>
            <person name="Hostin D."/>
            <person name="Houston K.A."/>
            <person name="Howland T.J."/>
            <person name="Wei M.-H."/>
            <person name="Ibegwam C."/>
            <person name="Jalali M."/>
            <person name="Kalush F."/>
            <person name="Karpen G.H."/>
            <person name="Ke Z."/>
            <person name="Kennison J.A."/>
            <person name="Ketchum K.A."/>
            <person name="Kimmel B.E."/>
            <person name="Kodira C.D."/>
            <person name="Kraft C.L."/>
            <person name="Kravitz S."/>
            <person name="Kulp D."/>
            <person name="Lai Z."/>
            <person name="Lasko P."/>
            <person name="Lei Y."/>
            <person name="Levitsky A.A."/>
            <person name="Li J.H."/>
            <person name="Li Z."/>
            <person name="Liang Y."/>
            <person name="Lin X."/>
            <person name="Liu X."/>
            <person name="Mattei B."/>
            <person name="McIntosh T.C."/>
            <person name="McLeod M.P."/>
            <person name="McPherson D."/>
            <person name="Merkulov G."/>
            <person name="Milshina N.V."/>
            <person name="Mobarry C."/>
            <person name="Morris J."/>
            <person name="Moshrefi A."/>
            <person name="Mount S.M."/>
            <person name="Moy M."/>
            <person name="Murphy B."/>
            <person name="Murphy L."/>
            <person name="Muzny D.M."/>
            <person name="Nelson D.L."/>
            <person name="Nelson D.R."/>
            <person name="Nelson K.A."/>
            <person name="Nixon K."/>
            <person name="Nusskern D.R."/>
            <person name="Pacleb J.M."/>
            <person name="Palazzolo M."/>
            <person name="Pittman G.S."/>
            <person name="Pan S."/>
            <person name="Pollard J."/>
            <person name="Puri V."/>
            <person name="Reese M.G."/>
            <person name="Reinert K."/>
            <person name="Remington K."/>
            <person name="Saunders R.D.C."/>
            <person name="Scheeler F."/>
            <person name="Shen H."/>
            <person name="Shue B.C."/>
            <person name="Siden-Kiamos I."/>
            <person name="Simpson M."/>
            <person name="Skupski M.P."/>
            <person name="Smith T.J."/>
            <person name="Spier E."/>
            <person name="Spradling A.C."/>
            <person name="Stapleton M."/>
            <person name="Strong R."/>
            <person name="Sun E."/>
            <person name="Svirskas R."/>
            <person name="Tector C."/>
            <person name="Turner R."/>
            <person name="Venter E."/>
            <person name="Wang A.H."/>
            <person name="Wang X."/>
            <person name="Wang Z.-Y."/>
            <person name="Wassarman D.A."/>
            <person name="Weinstock G.M."/>
            <person name="Weissenbach J."/>
            <person name="Williams S.M."/>
            <person name="Woodage T."/>
            <person name="Worley K.C."/>
            <person name="Wu D."/>
            <person name="Yang S."/>
            <person name="Yao Q.A."/>
            <person name="Ye J."/>
            <person name="Yeh R.-F."/>
            <person name="Zaveri J.S."/>
            <person name="Zhan M."/>
            <person name="Zhang G."/>
            <person name="Zhao Q."/>
            <person name="Zheng L."/>
            <person name="Zheng X.H."/>
            <person name="Zhong F.N."/>
            <person name="Zhong W."/>
            <person name="Zhou X."/>
            <person name="Zhu S.C."/>
            <person name="Zhu X."/>
            <person name="Smith H.O."/>
            <person name="Gibbs R.A."/>
            <person name="Myers E.W."/>
            <person name="Rubin G.M."/>
            <person name="Venter J.C."/>
        </authorList>
    </citation>
    <scope>NUCLEOTIDE SEQUENCE [LARGE SCALE GENOMIC DNA]</scope>
    <source>
        <strain>Berkeley</strain>
    </source>
</reference>
<reference key="3">
    <citation type="journal article" date="2002" name="Genome Biol.">
        <title>Annotation of the Drosophila melanogaster euchromatic genome: a systematic review.</title>
        <authorList>
            <person name="Misra S."/>
            <person name="Crosby M.A."/>
            <person name="Mungall C.J."/>
            <person name="Matthews B.B."/>
            <person name="Campbell K.S."/>
            <person name="Hradecky P."/>
            <person name="Huang Y."/>
            <person name="Kaminker J.S."/>
            <person name="Millburn G.H."/>
            <person name="Prochnik S.E."/>
            <person name="Smith C.D."/>
            <person name="Tupy J.L."/>
            <person name="Whitfield E.J."/>
            <person name="Bayraktaroglu L."/>
            <person name="Berman B.P."/>
            <person name="Bettencourt B.R."/>
            <person name="Celniker S.E."/>
            <person name="de Grey A.D.N.J."/>
            <person name="Drysdale R.A."/>
            <person name="Harris N.L."/>
            <person name="Richter J."/>
            <person name="Russo S."/>
            <person name="Schroeder A.J."/>
            <person name="Shu S.Q."/>
            <person name="Stapleton M."/>
            <person name="Yamada C."/>
            <person name="Ashburner M."/>
            <person name="Gelbart W.M."/>
            <person name="Rubin G.M."/>
            <person name="Lewis S.E."/>
        </authorList>
    </citation>
    <scope>GENOME REANNOTATION</scope>
    <source>
        <strain>Berkeley</strain>
    </source>
</reference>
<reference key="4">
    <citation type="journal article" date="2002" name="Genome Biol.">
        <title>A Drosophila full-length cDNA resource.</title>
        <authorList>
            <person name="Stapleton M."/>
            <person name="Carlson J.W."/>
            <person name="Brokstein P."/>
            <person name="Yu C."/>
            <person name="Champe M."/>
            <person name="George R.A."/>
            <person name="Guarin H."/>
            <person name="Kronmiller B."/>
            <person name="Pacleb J.M."/>
            <person name="Park S."/>
            <person name="Wan K.H."/>
            <person name="Rubin G.M."/>
            <person name="Celniker S.E."/>
        </authorList>
    </citation>
    <scope>NUCLEOTIDE SEQUENCE [LARGE SCALE MRNA]</scope>
    <source>
        <strain>Berkeley</strain>
        <tissue>Embryo</tissue>
    </source>
</reference>
<proteinExistence type="evidence at protein level"/>
<keyword id="KW-0002">3D-structure</keyword>
<keyword id="KW-0235">DNA replication</keyword>
<keyword id="KW-0238">DNA-binding</keyword>
<keyword id="KW-0539">Nucleus</keyword>
<keyword id="KW-1185">Reference proteome</keyword>
<gene>
    <name type="primary">Orc6</name>
    <name type="ORF">CG1584</name>
</gene>
<feature type="chain" id="PRO_0000127099" description="Origin recognition complex subunit 6">
    <location>
        <begin position="1"/>
        <end position="257"/>
    </location>
</feature>
<feature type="region of interest" description="Disordered" evidence="2">
    <location>
        <begin position="186"/>
        <end position="222"/>
    </location>
</feature>
<feature type="compositionally biased region" description="Basic and acidic residues" evidence="2">
    <location>
        <begin position="197"/>
        <end position="222"/>
    </location>
</feature>
<feature type="sequence conflict" description="In Ref. 1; AAD39474." evidence="3" ref="1">
    <original>G</original>
    <variation>A</variation>
    <location>
        <position position="73"/>
    </location>
</feature>
<feature type="sequence conflict" description="In Ref. 1; AAD39474." evidence="3" ref="1">
    <original>E</original>
    <variation>D</variation>
    <location>
        <position position="213"/>
    </location>
</feature>
<feature type="helix" evidence="4">
    <location>
        <begin position="225"/>
        <end position="237"/>
    </location>
</feature>
<evidence type="ECO:0000250" key="1"/>
<evidence type="ECO:0000256" key="2">
    <source>
        <dbReference type="SAM" id="MobiDB-lite"/>
    </source>
</evidence>
<evidence type="ECO:0000305" key="3"/>
<evidence type="ECO:0007829" key="4">
    <source>
        <dbReference type="PDB" id="7JGS"/>
    </source>
</evidence>
<sequence length="257" mass="29239">MTTLIEQLITKMGLREEPNVLEKTTELVRLLELRSTNVPLQINEYGKIVLCADLASCMIGIAFDKEQALKLSGLRKSQYLNNKRMFEKLLDLNKLASVNDICVQLGLNEVARKAEELMTLFKGVAATEDMGTDTSHPQYATMAVFQACRLLKKKVSKSKLMPFSNLRPSQFQLLEQQWERMIAKHHKESKVPSSTDMEGKLKENQNENIKGHEAKKAHKPPPEDYEIWKARMLAKAQAKLKELEASQSHMDSQLLEA</sequence>